<accession>B5E5U9</accession>
<gene>
    <name evidence="1" type="primary">def</name>
    <name type="ordered locus">SPG_1382</name>
</gene>
<proteinExistence type="inferred from homology"/>
<reference key="1">
    <citation type="journal article" date="2001" name="Microb. Drug Resist.">
        <title>Annotated draft genomic sequence from a Streptococcus pneumoniae type 19F clinical isolate.</title>
        <authorList>
            <person name="Dopazo J."/>
            <person name="Mendoza A."/>
            <person name="Herrero J."/>
            <person name="Caldara F."/>
            <person name="Humbert Y."/>
            <person name="Friedli L."/>
            <person name="Guerrier M."/>
            <person name="Grand-Schenk E."/>
            <person name="Gandin C."/>
            <person name="de Francesco M."/>
            <person name="Polissi A."/>
            <person name="Buell G."/>
            <person name="Feger G."/>
            <person name="Garcia E."/>
            <person name="Peitsch M."/>
            <person name="Garcia-Bustos J.F."/>
        </authorList>
    </citation>
    <scope>NUCLEOTIDE SEQUENCE [LARGE SCALE GENOMIC DNA]</scope>
    <source>
        <strain>G54</strain>
    </source>
</reference>
<reference key="2">
    <citation type="submission" date="2008-03" db="EMBL/GenBank/DDBJ databases">
        <title>Pneumococcal beta glucoside metabolism investigated by whole genome comparison.</title>
        <authorList>
            <person name="Mulas L."/>
            <person name="Trappetti C."/>
            <person name="Hakenbeck R."/>
            <person name="Iannelli F."/>
            <person name="Pozzi G."/>
            <person name="Davidsen T.M."/>
            <person name="Tettelin H."/>
            <person name="Oggioni M."/>
        </authorList>
    </citation>
    <scope>NUCLEOTIDE SEQUENCE [LARGE SCALE GENOMIC DNA]</scope>
    <source>
        <strain>G54</strain>
    </source>
</reference>
<sequence>MSAIERITKAAHLIDMNDIIREGNPTLRAIAEKVTFPLSDQEIILGEKMMQFLKHSQDPVMAEKMGLRGGVGLAAPQLDISKRIIAVLVPNIVEEGETPQEAYDLEAIMYNPKIVSHSVQDAALGEGEXCLSVDRNVPGYVVRHARVTVDYFDKDGEKHRIKLKGYNSIVVQHEIDHINGIMFYDRINEKDPFAVKDGLLILE</sequence>
<keyword id="KW-0378">Hydrolase</keyword>
<keyword id="KW-0408">Iron</keyword>
<keyword id="KW-0479">Metal-binding</keyword>
<keyword id="KW-0648">Protein biosynthesis</keyword>
<comment type="function">
    <text evidence="1">Removes the formyl group from the N-terminal Met of newly synthesized proteins. Requires at least a dipeptide for an efficient rate of reaction. N-terminal L-methionine is a prerequisite for activity but the enzyme has broad specificity at other positions.</text>
</comment>
<comment type="catalytic activity">
    <reaction evidence="1">
        <text>N-terminal N-formyl-L-methionyl-[peptide] + H2O = N-terminal L-methionyl-[peptide] + formate</text>
        <dbReference type="Rhea" id="RHEA:24420"/>
        <dbReference type="Rhea" id="RHEA-COMP:10639"/>
        <dbReference type="Rhea" id="RHEA-COMP:10640"/>
        <dbReference type="ChEBI" id="CHEBI:15377"/>
        <dbReference type="ChEBI" id="CHEBI:15740"/>
        <dbReference type="ChEBI" id="CHEBI:49298"/>
        <dbReference type="ChEBI" id="CHEBI:64731"/>
        <dbReference type="EC" id="3.5.1.88"/>
    </reaction>
</comment>
<comment type="cofactor">
    <cofactor evidence="1">
        <name>Fe(2+)</name>
        <dbReference type="ChEBI" id="CHEBI:29033"/>
    </cofactor>
    <text evidence="1">Binds 1 Fe(2+) ion.</text>
</comment>
<comment type="similarity">
    <text evidence="1">Belongs to the polypeptide deformylase family.</text>
</comment>
<name>DEF_STRP4</name>
<feature type="chain" id="PRO_1000097348" description="Peptide deformylase">
    <location>
        <begin position="1"/>
        <end position="203"/>
    </location>
</feature>
<feature type="active site" evidence="1">
    <location>
        <position position="174"/>
    </location>
</feature>
<feature type="binding site" evidence="1">
    <location>
        <position position="130"/>
    </location>
    <ligand>
        <name>Fe cation</name>
        <dbReference type="ChEBI" id="CHEBI:24875"/>
    </ligand>
</feature>
<feature type="binding site" evidence="1">
    <location>
        <position position="173"/>
    </location>
    <ligand>
        <name>Fe cation</name>
        <dbReference type="ChEBI" id="CHEBI:24875"/>
    </ligand>
</feature>
<feature type="binding site" evidence="1">
    <location>
        <position position="177"/>
    </location>
    <ligand>
        <name>Fe cation</name>
        <dbReference type="ChEBI" id="CHEBI:24875"/>
    </ligand>
</feature>
<protein>
    <recommendedName>
        <fullName evidence="1">Peptide deformylase</fullName>
        <shortName evidence="1">PDF</shortName>
        <ecNumber evidence="1">3.5.1.88</ecNumber>
    </recommendedName>
    <alternativeName>
        <fullName evidence="1">Polypeptide deformylase</fullName>
    </alternativeName>
</protein>
<evidence type="ECO:0000255" key="1">
    <source>
        <dbReference type="HAMAP-Rule" id="MF_00163"/>
    </source>
</evidence>
<organism>
    <name type="scientific">Streptococcus pneumoniae serotype 19F (strain G54)</name>
    <dbReference type="NCBI Taxonomy" id="512566"/>
    <lineage>
        <taxon>Bacteria</taxon>
        <taxon>Bacillati</taxon>
        <taxon>Bacillota</taxon>
        <taxon>Bacilli</taxon>
        <taxon>Lactobacillales</taxon>
        <taxon>Streptococcaceae</taxon>
        <taxon>Streptococcus</taxon>
    </lineage>
</organism>
<dbReference type="EC" id="3.5.1.88" evidence="1"/>
<dbReference type="EMBL" id="CP001015">
    <property type="protein sequence ID" value="ACF55009.1"/>
    <property type="molecule type" value="Genomic_DNA"/>
</dbReference>
<dbReference type="KEGG" id="spx:SPG_1382"/>
<dbReference type="HOGENOM" id="CLU_061901_4_0_9"/>
<dbReference type="GO" id="GO:0046872">
    <property type="term" value="F:metal ion binding"/>
    <property type="evidence" value="ECO:0007669"/>
    <property type="project" value="UniProtKB-KW"/>
</dbReference>
<dbReference type="GO" id="GO:0042586">
    <property type="term" value="F:peptide deformylase activity"/>
    <property type="evidence" value="ECO:0007669"/>
    <property type="project" value="UniProtKB-UniRule"/>
</dbReference>
<dbReference type="GO" id="GO:0043686">
    <property type="term" value="P:co-translational protein modification"/>
    <property type="evidence" value="ECO:0007669"/>
    <property type="project" value="TreeGrafter"/>
</dbReference>
<dbReference type="GO" id="GO:0006412">
    <property type="term" value="P:translation"/>
    <property type="evidence" value="ECO:0007669"/>
    <property type="project" value="UniProtKB-UniRule"/>
</dbReference>
<dbReference type="CDD" id="cd00487">
    <property type="entry name" value="Pep_deformylase"/>
    <property type="match status" value="1"/>
</dbReference>
<dbReference type="FunFam" id="3.90.45.10:FF:000002">
    <property type="entry name" value="Peptide deformylase"/>
    <property type="match status" value="1"/>
</dbReference>
<dbReference type="Gene3D" id="3.90.45.10">
    <property type="entry name" value="Peptide deformylase"/>
    <property type="match status" value="1"/>
</dbReference>
<dbReference type="HAMAP" id="MF_00163">
    <property type="entry name" value="Pep_deformylase"/>
    <property type="match status" value="1"/>
</dbReference>
<dbReference type="InterPro" id="IPR023635">
    <property type="entry name" value="Peptide_deformylase"/>
</dbReference>
<dbReference type="InterPro" id="IPR036821">
    <property type="entry name" value="Peptide_deformylase_sf"/>
</dbReference>
<dbReference type="NCBIfam" id="TIGR00079">
    <property type="entry name" value="pept_deformyl"/>
    <property type="match status" value="1"/>
</dbReference>
<dbReference type="PANTHER" id="PTHR10458">
    <property type="entry name" value="PEPTIDE DEFORMYLASE"/>
    <property type="match status" value="1"/>
</dbReference>
<dbReference type="PANTHER" id="PTHR10458:SF8">
    <property type="entry name" value="PEPTIDE DEFORMYLASE 2"/>
    <property type="match status" value="1"/>
</dbReference>
<dbReference type="Pfam" id="PF01327">
    <property type="entry name" value="Pep_deformylase"/>
    <property type="match status" value="1"/>
</dbReference>
<dbReference type="PIRSF" id="PIRSF004749">
    <property type="entry name" value="Pep_def"/>
    <property type="match status" value="1"/>
</dbReference>
<dbReference type="PRINTS" id="PR01576">
    <property type="entry name" value="PDEFORMYLASE"/>
</dbReference>
<dbReference type="SUPFAM" id="SSF56420">
    <property type="entry name" value="Peptide deformylase"/>
    <property type="match status" value="1"/>
</dbReference>